<reference key="1">
    <citation type="journal article" date="2005" name="Nat. Biotechnol.">
        <title>Genome sequence of the chlorinated compound-respiring bacterium Dehalococcoides species strain CBDB1.</title>
        <authorList>
            <person name="Kube M."/>
            <person name="Beck A."/>
            <person name="Zinder S.H."/>
            <person name="Kuhl H."/>
            <person name="Reinhardt R."/>
            <person name="Adrian L."/>
        </authorList>
    </citation>
    <scope>NUCLEOTIDE SEQUENCE [LARGE SCALE GENOMIC DNA]</scope>
    <source>
        <strain>CBDB1</strain>
    </source>
</reference>
<sequence>MAVNDREFHLKELDPVLMKDWEIAEKAEDFLKPVKVLAMELGLTEDEIIPHGKYIAKVDFAGVLARLKDRPNGKYIDVTAITPTPLGEGKSTTTMGLVQGLGKLGKKVTGAIRQPSSGPTFNIKGSAAGGGLSQCLPLSPFSLGLTGDIDAVTNSHNLAMVALQARLQHEANNTDEFLSSRHLTRLDIDPSRVEMKWAMDFCAQSLREIIMGIGGKTDGYRMPSGFGISVSSEVMAILSVFTSLSDLRERMGKIIVAYRKNDEPVTTADLEVDGAMTALLLRAVNPNLLQTIEGQPVFVHAGPFANIAIGQSSIVADRLALKLADYHVTESGFGADIGFEKFWNIKCRLSGLKPDCAVIVVTARALKMHGGGPKVTPGAPLDPAYTTPNTKLVEKGCQNMLAHIQTVKTAGINPVVCINHFAADTHEEIDIIRRTAEQAEARVAVSHHWAKGGDGATELAEAVTDACNEPNNFHFLYPENMPLKKRIETIARKVYGANGVSYTPIAMEKLARIESMGDTQFMPTCMVKTHLSLSHDPALKGRPSGFTLPIRDILTYMGAGLVVPVAGDIKLMPGTSSDPNFKRIDVDTQTGKVKGLF</sequence>
<feature type="chain" id="PRO_0000199345" description="Formate--tetrahydrofolate ligase">
    <location>
        <begin position="1"/>
        <end position="597"/>
    </location>
</feature>
<feature type="binding site" evidence="1">
    <location>
        <begin position="84"/>
        <end position="91"/>
    </location>
    <ligand>
        <name>ATP</name>
        <dbReference type="ChEBI" id="CHEBI:30616"/>
    </ligand>
</feature>
<keyword id="KW-0067">ATP-binding</keyword>
<keyword id="KW-0436">Ligase</keyword>
<keyword id="KW-0547">Nucleotide-binding</keyword>
<keyword id="KW-0554">One-carbon metabolism</keyword>
<accession>Q3ZX40</accession>
<comment type="catalytic activity">
    <reaction evidence="1">
        <text>(6S)-5,6,7,8-tetrahydrofolate + formate + ATP = (6R)-10-formyltetrahydrofolate + ADP + phosphate</text>
        <dbReference type="Rhea" id="RHEA:20221"/>
        <dbReference type="ChEBI" id="CHEBI:15740"/>
        <dbReference type="ChEBI" id="CHEBI:30616"/>
        <dbReference type="ChEBI" id="CHEBI:43474"/>
        <dbReference type="ChEBI" id="CHEBI:57453"/>
        <dbReference type="ChEBI" id="CHEBI:195366"/>
        <dbReference type="ChEBI" id="CHEBI:456216"/>
        <dbReference type="EC" id="6.3.4.3"/>
    </reaction>
</comment>
<comment type="pathway">
    <text evidence="1">One-carbon metabolism; tetrahydrofolate interconversion.</text>
</comment>
<comment type="similarity">
    <text evidence="1">Belongs to the formate--tetrahydrofolate ligase family.</text>
</comment>
<protein>
    <recommendedName>
        <fullName evidence="1">Formate--tetrahydrofolate ligase</fullName>
        <ecNumber evidence="1">6.3.4.3</ecNumber>
    </recommendedName>
    <alternativeName>
        <fullName evidence="1">Formyltetrahydrofolate synthetase</fullName>
        <shortName evidence="1">FHS</shortName>
        <shortName evidence="1">FTHFS</shortName>
    </alternativeName>
</protein>
<gene>
    <name evidence="1" type="primary">fhs</name>
    <name type="ordered locus">cbdbA660</name>
</gene>
<evidence type="ECO:0000255" key="1">
    <source>
        <dbReference type="HAMAP-Rule" id="MF_01543"/>
    </source>
</evidence>
<dbReference type="EC" id="6.3.4.3" evidence="1"/>
<dbReference type="EMBL" id="AJ965256">
    <property type="protein sequence ID" value="CAI82827.1"/>
    <property type="molecule type" value="Genomic_DNA"/>
</dbReference>
<dbReference type="SMR" id="Q3ZX40"/>
<dbReference type="KEGG" id="deh:cbdbA660"/>
<dbReference type="HOGENOM" id="CLU_003601_3_3_0"/>
<dbReference type="UniPathway" id="UPA00193"/>
<dbReference type="Proteomes" id="UP000000433">
    <property type="component" value="Chromosome"/>
</dbReference>
<dbReference type="GO" id="GO:0005524">
    <property type="term" value="F:ATP binding"/>
    <property type="evidence" value="ECO:0007669"/>
    <property type="project" value="UniProtKB-UniRule"/>
</dbReference>
<dbReference type="GO" id="GO:0004329">
    <property type="term" value="F:formate-tetrahydrofolate ligase activity"/>
    <property type="evidence" value="ECO:0007669"/>
    <property type="project" value="UniProtKB-UniRule"/>
</dbReference>
<dbReference type="GO" id="GO:0035999">
    <property type="term" value="P:tetrahydrofolate interconversion"/>
    <property type="evidence" value="ECO:0007669"/>
    <property type="project" value="UniProtKB-UniRule"/>
</dbReference>
<dbReference type="CDD" id="cd00477">
    <property type="entry name" value="FTHFS"/>
    <property type="match status" value="1"/>
</dbReference>
<dbReference type="Gene3D" id="3.30.1510.10">
    <property type="entry name" value="Domain 2, N(10)-formyltetrahydrofolate synthetase"/>
    <property type="match status" value="1"/>
</dbReference>
<dbReference type="Gene3D" id="3.10.410.10">
    <property type="entry name" value="Formyltetrahydrofolate synthetase, domain 3"/>
    <property type="match status" value="1"/>
</dbReference>
<dbReference type="Gene3D" id="3.40.50.300">
    <property type="entry name" value="P-loop containing nucleotide triphosphate hydrolases"/>
    <property type="match status" value="1"/>
</dbReference>
<dbReference type="HAMAP" id="MF_01543">
    <property type="entry name" value="FTHFS"/>
    <property type="match status" value="1"/>
</dbReference>
<dbReference type="InterPro" id="IPR000559">
    <property type="entry name" value="Formate_THF_ligase"/>
</dbReference>
<dbReference type="InterPro" id="IPR020628">
    <property type="entry name" value="Formate_THF_ligase_CS"/>
</dbReference>
<dbReference type="InterPro" id="IPR027417">
    <property type="entry name" value="P-loop_NTPase"/>
</dbReference>
<dbReference type="NCBIfam" id="NF010032">
    <property type="entry name" value="PRK13507.1"/>
    <property type="match status" value="1"/>
</dbReference>
<dbReference type="Pfam" id="PF01268">
    <property type="entry name" value="FTHFS"/>
    <property type="match status" value="1"/>
</dbReference>
<dbReference type="SUPFAM" id="SSF52540">
    <property type="entry name" value="P-loop containing nucleoside triphosphate hydrolases"/>
    <property type="match status" value="1"/>
</dbReference>
<dbReference type="PROSITE" id="PS00721">
    <property type="entry name" value="FTHFS_1"/>
    <property type="match status" value="1"/>
</dbReference>
<dbReference type="PROSITE" id="PS00722">
    <property type="entry name" value="FTHFS_2"/>
    <property type="match status" value="1"/>
</dbReference>
<proteinExistence type="inferred from homology"/>
<organism>
    <name type="scientific">Dehalococcoides mccartyi (strain CBDB1)</name>
    <dbReference type="NCBI Taxonomy" id="255470"/>
    <lineage>
        <taxon>Bacteria</taxon>
        <taxon>Bacillati</taxon>
        <taxon>Chloroflexota</taxon>
        <taxon>Dehalococcoidia</taxon>
        <taxon>Dehalococcoidales</taxon>
        <taxon>Dehalococcoidaceae</taxon>
        <taxon>Dehalococcoides</taxon>
    </lineage>
</organism>
<name>FTHS_DEHMC</name>